<protein>
    <recommendedName>
        <fullName>AP-1 complex subunit sigma-1A</fullName>
    </recommendedName>
    <alternativeName>
        <fullName>Adaptor protein complex AP-1 subunit sigma-1A</fullName>
    </alternativeName>
    <alternativeName>
        <fullName>Adaptor-related protein complex 1 subunit sigma-1A</fullName>
    </alternativeName>
    <alternativeName>
        <fullName>Clathrin assembly protein complex 1 sigma-1A small chain</fullName>
    </alternativeName>
    <alternativeName>
        <fullName>Clathrin coat assembly protein AP19</fullName>
    </alternativeName>
    <alternativeName>
        <fullName>Golgi adaptor HA1/AP1 adaptin sigma-1A subunit</fullName>
    </alternativeName>
    <alternativeName>
        <fullName>HA1 19 kDa subunit</fullName>
    </alternativeName>
    <alternativeName>
        <fullName>Sigma 1a subunit of AP-1 clathrin</fullName>
    </alternativeName>
    <alternativeName>
        <fullName>Sigma-adaptin 1A</fullName>
    </alternativeName>
    <alternativeName>
        <fullName>Sigma1A-adaptin</fullName>
    </alternativeName>
</protein>
<evidence type="ECO:0000269" key="1">
    <source>
    </source>
</evidence>
<evidence type="ECO:0000269" key="2">
    <source>
    </source>
</evidence>
<evidence type="ECO:0000269" key="3">
    <source>
    </source>
</evidence>
<evidence type="ECO:0000303" key="4">
    <source>
    </source>
</evidence>
<evidence type="ECO:0000303" key="5">
    <source ref="2"/>
</evidence>
<evidence type="ECO:0000305" key="6"/>
<evidence type="ECO:0007744" key="7">
    <source>
    </source>
</evidence>
<evidence type="ECO:0007744" key="8">
    <source>
    </source>
</evidence>
<evidence type="ECO:0007744" key="9">
    <source>
    </source>
</evidence>
<evidence type="ECO:0007829" key="10">
    <source>
        <dbReference type="PDB" id="4P6Z"/>
    </source>
</evidence>
<name>AP1S1_HUMAN</name>
<accession>P61966</accession>
<accession>B2R5D8</accession>
<accession>P82267</accession>
<accession>Q00382</accession>
<accession>Q53YA7</accession>
<accession>Q9BTN4</accession>
<accession>Q9UDW9</accession>
<reference key="1">
    <citation type="journal article" date="1998" name="J. Biol. Chem.">
        <title>Identification and characterization of novel clathrin adaptor-related proteins.</title>
        <authorList>
            <person name="Takatsu H."/>
            <person name="Sakurai M."/>
            <person name="Shin H.-W."/>
            <person name="Murakami K."/>
            <person name="Nakayama K."/>
        </authorList>
    </citation>
    <scope>NUCLEOTIDE SEQUENCE [MRNA] (ISOFORM 1)</scope>
    <scope>FUNCTION</scope>
    <scope>SUBCELLULAR LOCATION</scope>
    <scope>TISSUE SPECIFICITY</scope>
</reference>
<reference key="2">
    <citation type="submission" date="2003-05" db="EMBL/GenBank/DDBJ databases">
        <title>Cloning of human full-length CDSs in BD Creator(TM) system donor vector.</title>
        <authorList>
            <person name="Kalnine N."/>
            <person name="Chen X."/>
            <person name="Rolfs A."/>
            <person name="Halleck A."/>
            <person name="Hines L."/>
            <person name="Eisenstein S."/>
            <person name="Koundinya M."/>
            <person name="Raphael J."/>
            <person name="Moreira D."/>
            <person name="Kelley T."/>
            <person name="LaBaer J."/>
            <person name="Lin Y."/>
            <person name="Phelan M."/>
            <person name="Farmer A."/>
        </authorList>
    </citation>
    <scope>NUCLEOTIDE SEQUENCE [LARGE SCALE MRNA] (ISOFORM 2)</scope>
</reference>
<reference key="3">
    <citation type="journal article" date="2004" name="Nat. Genet.">
        <title>Complete sequencing and characterization of 21,243 full-length human cDNAs.</title>
        <authorList>
            <person name="Ota T."/>
            <person name="Suzuki Y."/>
            <person name="Nishikawa T."/>
            <person name="Otsuki T."/>
            <person name="Sugiyama T."/>
            <person name="Irie R."/>
            <person name="Wakamatsu A."/>
            <person name="Hayashi K."/>
            <person name="Sato H."/>
            <person name="Nagai K."/>
            <person name="Kimura K."/>
            <person name="Makita H."/>
            <person name="Sekine M."/>
            <person name="Obayashi M."/>
            <person name="Nishi T."/>
            <person name="Shibahara T."/>
            <person name="Tanaka T."/>
            <person name="Ishii S."/>
            <person name="Yamamoto J."/>
            <person name="Saito K."/>
            <person name="Kawai Y."/>
            <person name="Isono Y."/>
            <person name="Nakamura Y."/>
            <person name="Nagahari K."/>
            <person name="Murakami K."/>
            <person name="Yasuda T."/>
            <person name="Iwayanagi T."/>
            <person name="Wagatsuma M."/>
            <person name="Shiratori A."/>
            <person name="Sudo H."/>
            <person name="Hosoiri T."/>
            <person name="Kaku Y."/>
            <person name="Kodaira H."/>
            <person name="Kondo H."/>
            <person name="Sugawara M."/>
            <person name="Takahashi M."/>
            <person name="Kanda K."/>
            <person name="Yokoi T."/>
            <person name="Furuya T."/>
            <person name="Kikkawa E."/>
            <person name="Omura Y."/>
            <person name="Abe K."/>
            <person name="Kamihara K."/>
            <person name="Katsuta N."/>
            <person name="Sato K."/>
            <person name="Tanikawa M."/>
            <person name="Yamazaki M."/>
            <person name="Ninomiya K."/>
            <person name="Ishibashi T."/>
            <person name="Yamashita H."/>
            <person name="Murakawa K."/>
            <person name="Fujimori K."/>
            <person name="Tanai H."/>
            <person name="Kimata M."/>
            <person name="Watanabe M."/>
            <person name="Hiraoka S."/>
            <person name="Chiba Y."/>
            <person name="Ishida S."/>
            <person name="Ono Y."/>
            <person name="Takiguchi S."/>
            <person name="Watanabe S."/>
            <person name="Yosida M."/>
            <person name="Hotuta T."/>
            <person name="Kusano J."/>
            <person name="Kanehori K."/>
            <person name="Takahashi-Fujii A."/>
            <person name="Hara H."/>
            <person name="Tanase T.-O."/>
            <person name="Nomura Y."/>
            <person name="Togiya S."/>
            <person name="Komai F."/>
            <person name="Hara R."/>
            <person name="Takeuchi K."/>
            <person name="Arita M."/>
            <person name="Imose N."/>
            <person name="Musashino K."/>
            <person name="Yuuki H."/>
            <person name="Oshima A."/>
            <person name="Sasaki N."/>
            <person name="Aotsuka S."/>
            <person name="Yoshikawa Y."/>
            <person name="Matsunawa H."/>
            <person name="Ichihara T."/>
            <person name="Shiohata N."/>
            <person name="Sano S."/>
            <person name="Moriya S."/>
            <person name="Momiyama H."/>
            <person name="Satoh N."/>
            <person name="Takami S."/>
            <person name="Terashima Y."/>
            <person name="Suzuki O."/>
            <person name="Nakagawa S."/>
            <person name="Senoh A."/>
            <person name="Mizoguchi H."/>
            <person name="Goto Y."/>
            <person name="Shimizu F."/>
            <person name="Wakebe H."/>
            <person name="Hishigaki H."/>
            <person name="Watanabe T."/>
            <person name="Sugiyama A."/>
            <person name="Takemoto M."/>
            <person name="Kawakami B."/>
            <person name="Yamazaki M."/>
            <person name="Watanabe K."/>
            <person name="Kumagai A."/>
            <person name="Itakura S."/>
            <person name="Fukuzumi Y."/>
            <person name="Fujimori Y."/>
            <person name="Komiyama M."/>
            <person name="Tashiro H."/>
            <person name="Tanigami A."/>
            <person name="Fujiwara T."/>
            <person name="Ono T."/>
            <person name="Yamada K."/>
            <person name="Fujii Y."/>
            <person name="Ozaki K."/>
            <person name="Hirao M."/>
            <person name="Ohmori Y."/>
            <person name="Kawabata A."/>
            <person name="Hikiji T."/>
            <person name="Kobatake N."/>
            <person name="Inagaki H."/>
            <person name="Ikema Y."/>
            <person name="Okamoto S."/>
            <person name="Okitani R."/>
            <person name="Kawakami T."/>
            <person name="Noguchi S."/>
            <person name="Itoh T."/>
            <person name="Shigeta K."/>
            <person name="Senba T."/>
            <person name="Matsumura K."/>
            <person name="Nakajima Y."/>
            <person name="Mizuno T."/>
            <person name="Morinaga M."/>
            <person name="Sasaki M."/>
            <person name="Togashi T."/>
            <person name="Oyama M."/>
            <person name="Hata H."/>
            <person name="Watanabe M."/>
            <person name="Komatsu T."/>
            <person name="Mizushima-Sugano J."/>
            <person name="Satoh T."/>
            <person name="Shirai Y."/>
            <person name="Takahashi Y."/>
            <person name="Nakagawa K."/>
            <person name="Okumura K."/>
            <person name="Nagase T."/>
            <person name="Nomura N."/>
            <person name="Kikuchi H."/>
            <person name="Masuho Y."/>
            <person name="Yamashita R."/>
            <person name="Nakai K."/>
            <person name="Yada T."/>
            <person name="Nakamura Y."/>
            <person name="Ohara O."/>
            <person name="Isogai T."/>
            <person name="Sugano S."/>
        </authorList>
    </citation>
    <scope>NUCLEOTIDE SEQUENCE [LARGE SCALE MRNA] (ISOFORM 1)</scope>
    <source>
        <tissue>Caudate nucleus</tissue>
    </source>
</reference>
<reference key="4">
    <citation type="journal article" date="2003" name="Nature">
        <title>The DNA sequence of human chromosome 7.</title>
        <authorList>
            <person name="Hillier L.W."/>
            <person name="Fulton R.S."/>
            <person name="Fulton L.A."/>
            <person name="Graves T.A."/>
            <person name="Pepin K.H."/>
            <person name="Wagner-McPherson C."/>
            <person name="Layman D."/>
            <person name="Maas J."/>
            <person name="Jaeger S."/>
            <person name="Walker R."/>
            <person name="Wylie K."/>
            <person name="Sekhon M."/>
            <person name="Becker M.C."/>
            <person name="O'Laughlin M.D."/>
            <person name="Schaller M.E."/>
            <person name="Fewell G.A."/>
            <person name="Delehaunty K.D."/>
            <person name="Miner T.L."/>
            <person name="Nash W.E."/>
            <person name="Cordes M."/>
            <person name="Du H."/>
            <person name="Sun H."/>
            <person name="Edwards J."/>
            <person name="Bradshaw-Cordum H."/>
            <person name="Ali J."/>
            <person name="Andrews S."/>
            <person name="Isak A."/>
            <person name="Vanbrunt A."/>
            <person name="Nguyen C."/>
            <person name="Du F."/>
            <person name="Lamar B."/>
            <person name="Courtney L."/>
            <person name="Kalicki J."/>
            <person name="Ozersky P."/>
            <person name="Bielicki L."/>
            <person name="Scott K."/>
            <person name="Holmes A."/>
            <person name="Harkins R."/>
            <person name="Harris A."/>
            <person name="Strong C.M."/>
            <person name="Hou S."/>
            <person name="Tomlinson C."/>
            <person name="Dauphin-Kohlberg S."/>
            <person name="Kozlowicz-Reilly A."/>
            <person name="Leonard S."/>
            <person name="Rohlfing T."/>
            <person name="Rock S.M."/>
            <person name="Tin-Wollam A.-M."/>
            <person name="Abbott A."/>
            <person name="Minx P."/>
            <person name="Maupin R."/>
            <person name="Strowmatt C."/>
            <person name="Latreille P."/>
            <person name="Miller N."/>
            <person name="Johnson D."/>
            <person name="Murray J."/>
            <person name="Woessner J.P."/>
            <person name="Wendl M.C."/>
            <person name="Yang S.-P."/>
            <person name="Schultz B.R."/>
            <person name="Wallis J.W."/>
            <person name="Spieth J."/>
            <person name="Bieri T.A."/>
            <person name="Nelson J.O."/>
            <person name="Berkowicz N."/>
            <person name="Wohldmann P.E."/>
            <person name="Cook L.L."/>
            <person name="Hickenbotham M.T."/>
            <person name="Eldred J."/>
            <person name="Williams D."/>
            <person name="Bedell J.A."/>
            <person name="Mardis E.R."/>
            <person name="Clifton S.W."/>
            <person name="Chissoe S.L."/>
            <person name="Marra M.A."/>
            <person name="Raymond C."/>
            <person name="Haugen E."/>
            <person name="Gillett W."/>
            <person name="Zhou Y."/>
            <person name="James R."/>
            <person name="Phelps K."/>
            <person name="Iadanoto S."/>
            <person name="Bubb K."/>
            <person name="Simms E."/>
            <person name="Levy R."/>
            <person name="Clendenning J."/>
            <person name="Kaul R."/>
            <person name="Kent W.J."/>
            <person name="Furey T.S."/>
            <person name="Baertsch R.A."/>
            <person name="Brent M.R."/>
            <person name="Keibler E."/>
            <person name="Flicek P."/>
            <person name="Bork P."/>
            <person name="Suyama M."/>
            <person name="Bailey J.A."/>
            <person name="Portnoy M.E."/>
            <person name="Torrents D."/>
            <person name="Chinwalla A.T."/>
            <person name="Gish W.R."/>
            <person name="Eddy S.R."/>
            <person name="McPherson J.D."/>
            <person name="Olson M.V."/>
            <person name="Eichler E.E."/>
            <person name="Green E.D."/>
            <person name="Waterston R.H."/>
            <person name="Wilson R.K."/>
        </authorList>
    </citation>
    <scope>NUCLEOTIDE SEQUENCE [LARGE SCALE GENOMIC DNA]</scope>
</reference>
<reference key="5">
    <citation type="submission" date="2005-07" db="EMBL/GenBank/DDBJ databases">
        <authorList>
            <person name="Mural R.J."/>
            <person name="Istrail S."/>
            <person name="Sutton G.G."/>
            <person name="Florea L."/>
            <person name="Halpern A.L."/>
            <person name="Mobarry C.M."/>
            <person name="Lippert R."/>
            <person name="Walenz B."/>
            <person name="Shatkay H."/>
            <person name="Dew I."/>
            <person name="Miller J.R."/>
            <person name="Flanigan M.J."/>
            <person name="Edwards N.J."/>
            <person name="Bolanos R."/>
            <person name="Fasulo D."/>
            <person name="Halldorsson B.V."/>
            <person name="Hannenhalli S."/>
            <person name="Turner R."/>
            <person name="Yooseph S."/>
            <person name="Lu F."/>
            <person name="Nusskern D.R."/>
            <person name="Shue B.C."/>
            <person name="Zheng X.H."/>
            <person name="Zhong F."/>
            <person name="Delcher A.L."/>
            <person name="Huson D.H."/>
            <person name="Kravitz S.A."/>
            <person name="Mouchard L."/>
            <person name="Reinert K."/>
            <person name="Remington K.A."/>
            <person name="Clark A.G."/>
            <person name="Waterman M.S."/>
            <person name="Eichler E.E."/>
            <person name="Adams M.D."/>
            <person name="Hunkapiller M.W."/>
            <person name="Myers E.W."/>
            <person name="Venter J.C."/>
        </authorList>
    </citation>
    <scope>NUCLEOTIDE SEQUENCE [LARGE SCALE GENOMIC DNA]</scope>
</reference>
<reference key="6">
    <citation type="journal article" date="2004" name="Genome Res.">
        <title>The status, quality, and expansion of the NIH full-length cDNA project: the Mammalian Gene Collection (MGC).</title>
        <authorList>
            <consortium name="The MGC Project Team"/>
        </authorList>
    </citation>
    <scope>NUCLEOTIDE SEQUENCE [LARGE SCALE MRNA] (ISOFORM 2)</scope>
    <source>
        <tissue>Placenta</tissue>
    </source>
</reference>
<reference key="7">
    <citation type="journal article" date="2006" name="Cell. Microbiol.">
        <title>Transcriptomic and proteomic analyses of rhabdomyosarcoma cells reveal differential cellular gene expression in response to enterovirus 71 infection.</title>
        <authorList>
            <person name="Leong W.F."/>
            <person name="Chow V.T."/>
        </authorList>
    </citation>
    <scope>INDUCTION</scope>
    <scope>IDENTIFICATION BY MASS SPECTROMETRY</scope>
</reference>
<reference key="8">
    <citation type="journal article" date="2008" name="Mol. Cell">
        <title>Kinase-selective enrichment enables quantitative phosphoproteomics of the kinome across the cell cycle.</title>
        <authorList>
            <person name="Daub H."/>
            <person name="Olsen J.V."/>
            <person name="Bairlein M."/>
            <person name="Gnad F."/>
            <person name="Oppermann F.S."/>
            <person name="Korner R."/>
            <person name="Greff Z."/>
            <person name="Keri G."/>
            <person name="Stemmann O."/>
            <person name="Mann M."/>
        </authorList>
    </citation>
    <scope>PHOSPHORYLATION [LARGE SCALE ANALYSIS] AT SER-147</scope>
    <scope>IDENTIFICATION BY MASS SPECTROMETRY [LARGE SCALE ANALYSIS]</scope>
    <source>
        <tissue>Cervix carcinoma</tissue>
    </source>
</reference>
<reference key="9">
    <citation type="journal article" date="2008" name="PLoS Genet.">
        <title>Disruption of AP1S1, causing a novel neurocutaneous syndrome, perturbs development of the skin and spinal cord.</title>
        <authorList>
            <person name="Montpetit A."/>
            <person name="Cote S."/>
            <person name="Brustein E."/>
            <person name="Drouin C.A."/>
            <person name="Lapointe L."/>
            <person name="Boudreau M."/>
            <person name="Meloche C."/>
            <person name="Drouin R."/>
            <person name="Hudson T.J."/>
            <person name="Drapeau P."/>
            <person name="Cossette P."/>
        </authorList>
    </citation>
    <scope>INVOLVEMENT IN MEDNIK</scope>
</reference>
<reference key="10">
    <citation type="journal article" date="2009" name="Anal. Chem.">
        <title>Lys-N and trypsin cover complementary parts of the phosphoproteome in a refined SCX-based approach.</title>
        <authorList>
            <person name="Gauci S."/>
            <person name="Helbig A.O."/>
            <person name="Slijper M."/>
            <person name="Krijgsveld J."/>
            <person name="Heck A.J."/>
            <person name="Mohammed S."/>
        </authorList>
    </citation>
    <scope>IDENTIFICATION BY MASS SPECTROMETRY [LARGE SCALE ANALYSIS]</scope>
</reference>
<reference key="11">
    <citation type="journal article" date="2010" name="Sci. Signal.">
        <title>Quantitative phosphoproteomics reveals widespread full phosphorylation site occupancy during mitosis.</title>
        <authorList>
            <person name="Olsen J.V."/>
            <person name="Vermeulen M."/>
            <person name="Santamaria A."/>
            <person name="Kumar C."/>
            <person name="Miller M.L."/>
            <person name="Jensen L.J."/>
            <person name="Gnad F."/>
            <person name="Cox J."/>
            <person name="Jensen T.S."/>
            <person name="Nigg E.A."/>
            <person name="Brunak S."/>
            <person name="Mann M."/>
        </authorList>
    </citation>
    <scope>PHOSPHORYLATION [LARGE SCALE ANALYSIS] AT SER-147</scope>
    <scope>IDENTIFICATION BY MASS SPECTROMETRY [LARGE SCALE ANALYSIS]</scope>
    <source>
        <tissue>Cervix carcinoma</tissue>
    </source>
</reference>
<reference key="12">
    <citation type="journal article" date="2011" name="BMC Syst. Biol.">
        <title>Initial characterization of the human central proteome.</title>
        <authorList>
            <person name="Burkard T.R."/>
            <person name="Planyavsky M."/>
            <person name="Kaupe I."/>
            <person name="Breitwieser F.P."/>
            <person name="Buerckstuemmer T."/>
            <person name="Bennett K.L."/>
            <person name="Superti-Furga G."/>
            <person name="Colinge J."/>
        </authorList>
    </citation>
    <scope>IDENTIFICATION BY MASS SPECTROMETRY [LARGE SCALE ANALYSIS]</scope>
</reference>
<reference key="13">
    <citation type="journal article" date="2014" name="J. Proteomics">
        <title>An enzyme assisted RP-RPLC approach for in-depth analysis of human liver phosphoproteome.</title>
        <authorList>
            <person name="Bian Y."/>
            <person name="Song C."/>
            <person name="Cheng K."/>
            <person name="Dong M."/>
            <person name="Wang F."/>
            <person name="Huang J."/>
            <person name="Sun D."/>
            <person name="Wang L."/>
            <person name="Ye M."/>
            <person name="Zou H."/>
        </authorList>
    </citation>
    <scope>PHOSPHORYLATION [LARGE SCALE ANALYSIS] AT SER-147</scope>
    <scope>IDENTIFICATION BY MASS SPECTROMETRY [LARGE SCALE ANALYSIS]</scope>
    <source>
        <tissue>Liver</tissue>
    </source>
</reference>
<feature type="chain" id="PRO_0000193797" description="AP-1 complex subunit sigma-1A">
    <location>
        <begin position="1"/>
        <end position="158"/>
    </location>
</feature>
<feature type="modified residue" description="Phosphoserine" evidence="7 8 9">
    <location>
        <position position="147"/>
    </location>
</feature>
<feature type="splice variant" id="VSP_000171" description="In isoform 2." evidence="4 5">
    <original>KKSVLKAIEQADLLQEEDESPRSVLEEMGLA</original>
    <variation>TFPFSH</variation>
    <location>
        <begin position="128"/>
        <end position="158"/>
    </location>
</feature>
<feature type="strand" evidence="10">
    <location>
        <begin position="2"/>
        <end position="9"/>
    </location>
</feature>
<feature type="strand" evidence="10">
    <location>
        <begin position="14"/>
        <end position="21"/>
    </location>
</feature>
<feature type="helix" evidence="10">
    <location>
        <begin position="25"/>
        <end position="40"/>
    </location>
</feature>
<feature type="strand" evidence="10">
    <location>
        <begin position="48"/>
        <end position="52"/>
    </location>
</feature>
<feature type="strand" evidence="10">
    <location>
        <begin position="55"/>
        <end position="62"/>
    </location>
</feature>
<feature type="strand" evidence="10">
    <location>
        <begin position="65"/>
        <end position="71"/>
    </location>
</feature>
<feature type="helix" evidence="10">
    <location>
        <begin position="77"/>
        <end position="95"/>
    </location>
</feature>
<feature type="helix" evidence="10">
    <location>
        <begin position="100"/>
        <end position="105"/>
    </location>
</feature>
<feature type="helix" evidence="10">
    <location>
        <begin position="107"/>
        <end position="117"/>
    </location>
</feature>
<feature type="strand" evidence="10">
    <location>
        <begin position="122"/>
        <end position="124"/>
    </location>
</feature>
<feature type="helix" evidence="10">
    <location>
        <begin position="128"/>
        <end position="146"/>
    </location>
</feature>
<comment type="function">
    <text evidence="3">Subunit of clathrin-associated adaptor protein complex 1 that plays a role in protein sorting in the late-Golgi/trans-Golgi network (TGN) and/or endosomes. The AP complexes mediate both the recruitment of clathrin to membranes and the recognition of sorting signals within the cytosolic tails of transmembrane cargo molecules.</text>
</comment>
<comment type="subunit">
    <text>Adaptor protein complex 1 (AP-1) is a heterotetramer composed of two large adaptins (gamma-type subunit AP1G1 and beta-type subunit AP1B1), a medium adaptin (mu-type subunit AP1M1 or AP1M2) and a small adaptin (sigma-type subunit AP1S1 or AP1S2 or AP1S3).</text>
</comment>
<comment type="interaction">
    <interactant intactId="EBI-12067760">
        <id>P61966-2</id>
    </interactant>
    <interactant intactId="EBI-716404">
        <id>P16284</id>
        <label>PECAM1</label>
    </interactant>
    <organismsDiffer>false</organismsDiffer>
    <experiments>3</experiments>
</comment>
<comment type="interaction">
    <interactant intactId="EBI-12067760">
        <id>P61966-2</id>
    </interactant>
    <interactant intactId="EBI-79165">
        <id>Q9NRD5</id>
        <label>PICK1</label>
    </interactant>
    <organismsDiffer>false</organismsDiffer>
    <experiments>3</experiments>
</comment>
<comment type="interaction">
    <interactant intactId="EBI-12067760">
        <id>P61966-2</id>
    </interactant>
    <interactant intactId="EBI-296151">
        <id>P37173</id>
        <label>TGFBR2</label>
    </interactant>
    <organismsDiffer>false</organismsDiffer>
    <experiments>3</experiments>
</comment>
<comment type="subcellular location">
    <subcellularLocation>
        <location evidence="3">Golgi apparatus</location>
    </subcellularLocation>
    <subcellularLocation>
        <location evidence="3">Cytoplasmic vesicle membrane</location>
        <topology evidence="3">Peripheral membrane protein</topology>
        <orientation evidence="3">Cytoplasmic side</orientation>
    </subcellularLocation>
    <subcellularLocation>
        <location evidence="3">Membrane</location>
        <location evidence="3">Clathrin-coated pit</location>
    </subcellularLocation>
    <text>Component of the coat surrounding the cytoplasmic face of coated vesicles located at the Golgi complex.</text>
</comment>
<comment type="alternative products">
    <event type="alternative splicing"/>
    <isoform>
        <id>P61966-1</id>
        <id>Q00382-1</id>
        <name>1</name>
        <sequence type="displayed"/>
    </isoform>
    <isoform>
        <id>P61966-2</id>
        <id>Q00382-2</id>
        <name>2</name>
        <sequence type="described" ref="VSP_000171"/>
    </isoform>
</comment>
<comment type="tissue specificity">
    <text evidence="3">Widely expressed.</text>
</comment>
<comment type="induction">
    <text evidence="1">Up-regulated in response to enterovirus 71 (EV71) infection.</text>
</comment>
<comment type="disease" evidence="2">
    <disease id="DI-03642">
        <name>MEDNIK syndrome</name>
        <acronym>MEDNIK</acronym>
        <description>A disorder characterized by erythematous skin lesions and hyperkeratosis, severe psychomotor retardation, peripheral neuropathy, sensorineural hearing loss, together with elevated very-long-chain fatty acids and severe congenital diarrhea.</description>
        <dbReference type="MIM" id="609313"/>
    </disease>
    <text>The disease is caused by variants affecting the gene represented in this entry.</text>
</comment>
<comment type="similarity">
    <text evidence="6">Belongs to the adaptor complexes small subunit family.</text>
</comment>
<comment type="sequence caution" evidence="6">
    <conflict type="erroneous initiation">
        <sequence resource="EMBL-CDS" id="AAD45829"/>
    </conflict>
    <text>Truncated N-terminus.</text>
</comment>
<sequence>MMRFMLLFSRQGKLRLQKWYLATSDKERKKMVRELMQVVLARKPKMCSFLEWRDLKVVYKRYASLYFCCAIEGQDNELITLELIHRYVELLDKYFGSVCELDIIFNFEKAYFILDEFLMGGDVQDTSKKSVLKAIEQADLLQEEDESPRSVLEEMGLA</sequence>
<proteinExistence type="evidence at protein level"/>
<organism>
    <name type="scientific">Homo sapiens</name>
    <name type="common">Human</name>
    <dbReference type="NCBI Taxonomy" id="9606"/>
    <lineage>
        <taxon>Eukaryota</taxon>
        <taxon>Metazoa</taxon>
        <taxon>Chordata</taxon>
        <taxon>Craniata</taxon>
        <taxon>Vertebrata</taxon>
        <taxon>Euteleostomi</taxon>
        <taxon>Mammalia</taxon>
        <taxon>Eutheria</taxon>
        <taxon>Euarchontoglires</taxon>
        <taxon>Primates</taxon>
        <taxon>Haplorrhini</taxon>
        <taxon>Catarrhini</taxon>
        <taxon>Hominidae</taxon>
        <taxon>Homo</taxon>
    </lineage>
</organism>
<keyword id="KW-0002">3D-structure</keyword>
<keyword id="KW-0025">Alternative splicing</keyword>
<keyword id="KW-0168">Coated pit</keyword>
<keyword id="KW-0968">Cytoplasmic vesicle</keyword>
<keyword id="KW-0209">Deafness</keyword>
<keyword id="KW-0333">Golgi apparatus</keyword>
<keyword id="KW-0977">Ichthyosis</keyword>
<keyword id="KW-0991">Intellectual disability</keyword>
<keyword id="KW-0472">Membrane</keyword>
<keyword id="KW-0622">Neuropathy</keyword>
<keyword id="KW-0597">Phosphoprotein</keyword>
<keyword id="KW-0653">Protein transport</keyword>
<keyword id="KW-1267">Proteomics identification</keyword>
<keyword id="KW-1185">Reference proteome</keyword>
<keyword id="KW-0813">Transport</keyword>
<gene>
    <name type="primary">AP1S1</name>
    <name type="synonym">AP19</name>
    <name type="synonym">CLAPS1</name>
</gene>
<dbReference type="EMBL" id="AB015319">
    <property type="protein sequence ID" value="BAA33391.1"/>
    <property type="molecule type" value="mRNA"/>
</dbReference>
<dbReference type="EMBL" id="BT006779">
    <property type="protein sequence ID" value="AAP35425.1"/>
    <property type="molecule type" value="mRNA"/>
</dbReference>
<dbReference type="EMBL" id="AK312151">
    <property type="protein sequence ID" value="BAG35085.1"/>
    <property type="molecule type" value="mRNA"/>
</dbReference>
<dbReference type="EMBL" id="AC004876">
    <property type="protein sequence ID" value="AAD45829.1"/>
    <property type="status" value="ALT_INIT"/>
    <property type="molecule type" value="Genomic_DNA"/>
</dbReference>
<dbReference type="EMBL" id="CH471197">
    <property type="protein sequence ID" value="EAW50199.1"/>
    <property type="molecule type" value="Genomic_DNA"/>
</dbReference>
<dbReference type="EMBL" id="BC003561">
    <property type="protein sequence ID" value="AAH03561.1"/>
    <property type="molecule type" value="mRNA"/>
</dbReference>
<dbReference type="CCDS" id="CCDS47669.1"/>
<dbReference type="RefSeq" id="NP_001274.1">
    <molecule id="P61966-1"/>
    <property type="nucleotide sequence ID" value="NM_001283.5"/>
</dbReference>
<dbReference type="PDB" id="4P6Z">
    <property type="method" value="X-ray"/>
    <property type="resolution" value="3.00 A"/>
    <property type="chains" value="S=1-158"/>
</dbReference>
<dbReference type="PDBsum" id="4P6Z"/>
<dbReference type="SMR" id="P61966"/>
<dbReference type="BioGRID" id="107588">
    <property type="interactions" value="62"/>
</dbReference>
<dbReference type="ComplexPortal" id="CPX-5047">
    <property type="entry name" value="Ubiquitous AP-1 Adaptor complex, sigma1a variant"/>
</dbReference>
<dbReference type="ComplexPortal" id="CPX-5050">
    <property type="entry name" value="Endothelial AP-1 Adaptor complex, sigma1a variant"/>
</dbReference>
<dbReference type="CORUM" id="P61966"/>
<dbReference type="FunCoup" id="P61966">
    <property type="interactions" value="2061"/>
</dbReference>
<dbReference type="IntAct" id="P61966">
    <property type="interactions" value="22"/>
</dbReference>
<dbReference type="MINT" id="P61966"/>
<dbReference type="STRING" id="9606.ENSP00000336666"/>
<dbReference type="TCDB" id="9.B.278.1.1">
    <property type="family name" value="the organellar-targeting adaptor protein complex (o-apc) family"/>
</dbReference>
<dbReference type="GlyGen" id="P61966">
    <property type="glycosylation" value="1 site, 1 O-linked glycan (1 site)"/>
</dbReference>
<dbReference type="iPTMnet" id="P61966"/>
<dbReference type="MetOSite" id="P61966"/>
<dbReference type="PhosphoSitePlus" id="P61966"/>
<dbReference type="BioMuta" id="AP1S1"/>
<dbReference type="DMDM" id="48428719"/>
<dbReference type="jPOST" id="P61966"/>
<dbReference type="MassIVE" id="P61966"/>
<dbReference type="PaxDb" id="9606-ENSP00000336666"/>
<dbReference type="PeptideAtlas" id="P61966"/>
<dbReference type="ProteomicsDB" id="57348"/>
<dbReference type="ProteomicsDB" id="57349">
    <molecule id="P61966-2"/>
</dbReference>
<dbReference type="Pumba" id="P61966"/>
<dbReference type="Antibodypedia" id="30972">
    <property type="antibodies" value="130 antibodies from 20 providers"/>
</dbReference>
<dbReference type="DNASU" id="1174"/>
<dbReference type="Ensembl" id="ENST00000337619.11">
    <molecule id="P61966-1"/>
    <property type="protein sequence ID" value="ENSP00000336666.5"/>
    <property type="gene ID" value="ENSG00000106367.15"/>
</dbReference>
<dbReference type="Ensembl" id="ENST00000443943.5">
    <molecule id="P61966-1"/>
    <property type="protein sequence ID" value="ENSP00000410780.1"/>
    <property type="gene ID" value="ENSG00000106367.15"/>
</dbReference>
<dbReference type="GeneID" id="1174"/>
<dbReference type="KEGG" id="hsa:1174"/>
<dbReference type="MANE-Select" id="ENST00000337619.11">
    <property type="protein sequence ID" value="ENSP00000336666.5"/>
    <property type="RefSeq nucleotide sequence ID" value="NM_001283.5"/>
    <property type="RefSeq protein sequence ID" value="NP_001274.1"/>
</dbReference>
<dbReference type="UCSC" id="uc003uxv.5">
    <property type="organism name" value="human"/>
</dbReference>
<dbReference type="AGR" id="HGNC:559"/>
<dbReference type="CTD" id="1174"/>
<dbReference type="DisGeNET" id="1174"/>
<dbReference type="GeneCards" id="AP1S1"/>
<dbReference type="GeneReviews" id="AP1S1"/>
<dbReference type="HGNC" id="HGNC:559">
    <property type="gene designation" value="AP1S1"/>
</dbReference>
<dbReference type="HPA" id="ENSG00000106367">
    <property type="expression patterns" value="Tissue enhanced (brain)"/>
</dbReference>
<dbReference type="MalaCards" id="AP1S1"/>
<dbReference type="MIM" id="603531">
    <property type="type" value="gene"/>
</dbReference>
<dbReference type="MIM" id="609313">
    <property type="type" value="phenotype"/>
</dbReference>
<dbReference type="neXtProt" id="NX_P61966"/>
<dbReference type="OpenTargets" id="ENSG00000106367"/>
<dbReference type="Orphanet" id="171851">
    <property type="disease" value="MEDNIK syndrome"/>
</dbReference>
<dbReference type="PharmGKB" id="PA24850"/>
<dbReference type="VEuPathDB" id="HostDB:ENSG00000106367"/>
<dbReference type="eggNOG" id="KOG0934">
    <property type="taxonomic scope" value="Eukaryota"/>
</dbReference>
<dbReference type="GeneTree" id="ENSGT00970000193372"/>
<dbReference type="HOGENOM" id="CLU_061221_1_3_1"/>
<dbReference type="InParanoid" id="P61966"/>
<dbReference type="OMA" id="WYVATSE"/>
<dbReference type="OrthoDB" id="371463at2759"/>
<dbReference type="PAN-GO" id="P61966">
    <property type="GO annotations" value="2 GO annotations based on evolutionary models"/>
</dbReference>
<dbReference type="PhylomeDB" id="P61966"/>
<dbReference type="TreeFam" id="TF312921"/>
<dbReference type="PathwayCommons" id="P61966"/>
<dbReference type="Reactome" id="R-HSA-164940">
    <property type="pathway name" value="Nef mediated downregulation of MHC class I complex cell surface expression"/>
</dbReference>
<dbReference type="Reactome" id="R-HSA-2132295">
    <property type="pathway name" value="MHC class II antigen presentation"/>
</dbReference>
<dbReference type="Reactome" id="R-HSA-432720">
    <property type="pathway name" value="Lysosome Vesicle Biogenesis"/>
</dbReference>
<dbReference type="Reactome" id="R-HSA-432722">
    <property type="pathway name" value="Golgi Associated Vesicle Biogenesis"/>
</dbReference>
<dbReference type="SignaLink" id="P61966"/>
<dbReference type="SIGNOR" id="P61966"/>
<dbReference type="BioGRID-ORCS" id="1174">
    <property type="hits" value="27 hits in 1155 CRISPR screens"/>
</dbReference>
<dbReference type="ChiTaRS" id="AP1S1">
    <property type="organism name" value="human"/>
</dbReference>
<dbReference type="EvolutionaryTrace" id="P61966"/>
<dbReference type="GeneWiki" id="AP1S1"/>
<dbReference type="GenomeRNAi" id="1174"/>
<dbReference type="Pharos" id="P61966">
    <property type="development level" value="Tbio"/>
</dbReference>
<dbReference type="PRO" id="PR:P61966"/>
<dbReference type="Proteomes" id="UP000005640">
    <property type="component" value="Chromosome 7"/>
</dbReference>
<dbReference type="RNAct" id="P61966">
    <property type="molecule type" value="protein"/>
</dbReference>
<dbReference type="Bgee" id="ENSG00000106367">
    <property type="expression patterns" value="Expressed in cortical plate and 175 other cell types or tissues"/>
</dbReference>
<dbReference type="ExpressionAtlas" id="P61966">
    <property type="expression patterns" value="baseline and differential"/>
</dbReference>
<dbReference type="GO" id="GO:0030121">
    <property type="term" value="C:AP-1 adaptor complex"/>
    <property type="evidence" value="ECO:0000304"/>
    <property type="project" value="UniProtKB"/>
</dbReference>
<dbReference type="GO" id="GO:0005905">
    <property type="term" value="C:clathrin-coated pit"/>
    <property type="evidence" value="ECO:0007669"/>
    <property type="project" value="UniProtKB-SubCell"/>
</dbReference>
<dbReference type="GO" id="GO:0030659">
    <property type="term" value="C:cytoplasmic vesicle membrane"/>
    <property type="evidence" value="ECO:0000304"/>
    <property type="project" value="Reactome"/>
</dbReference>
<dbReference type="GO" id="GO:0005829">
    <property type="term" value="C:cytosol"/>
    <property type="evidence" value="ECO:0000304"/>
    <property type="project" value="Reactome"/>
</dbReference>
<dbReference type="GO" id="GO:0005769">
    <property type="term" value="C:early endosome"/>
    <property type="evidence" value="ECO:0000303"/>
    <property type="project" value="ComplexPortal"/>
</dbReference>
<dbReference type="GO" id="GO:0005794">
    <property type="term" value="C:Golgi apparatus"/>
    <property type="evidence" value="ECO:0000314"/>
    <property type="project" value="HPA"/>
</dbReference>
<dbReference type="GO" id="GO:0000139">
    <property type="term" value="C:Golgi membrane"/>
    <property type="evidence" value="ECO:0000304"/>
    <property type="project" value="Reactome"/>
</dbReference>
<dbReference type="GO" id="GO:0043231">
    <property type="term" value="C:intracellular membrane-bounded organelle"/>
    <property type="evidence" value="ECO:0000314"/>
    <property type="project" value="HPA"/>
</dbReference>
<dbReference type="GO" id="GO:0005765">
    <property type="term" value="C:lysosomal membrane"/>
    <property type="evidence" value="ECO:0000304"/>
    <property type="project" value="Reactome"/>
</dbReference>
<dbReference type="GO" id="GO:0016020">
    <property type="term" value="C:membrane"/>
    <property type="evidence" value="ECO:0007005"/>
    <property type="project" value="UniProtKB"/>
</dbReference>
<dbReference type="GO" id="GO:0043195">
    <property type="term" value="C:terminal bouton"/>
    <property type="evidence" value="ECO:0007669"/>
    <property type="project" value="Ensembl"/>
</dbReference>
<dbReference type="GO" id="GO:0032588">
    <property type="term" value="C:trans-Golgi network membrane"/>
    <property type="evidence" value="ECO:0000304"/>
    <property type="project" value="Reactome"/>
</dbReference>
<dbReference type="GO" id="GO:0035615">
    <property type="term" value="F:clathrin adaptor activity"/>
    <property type="evidence" value="ECO:0007669"/>
    <property type="project" value="InterPro"/>
</dbReference>
<dbReference type="GO" id="GO:0110010">
    <property type="term" value="P:basolateral protein secretion"/>
    <property type="evidence" value="ECO:0000303"/>
    <property type="project" value="ComplexPortal"/>
</dbReference>
<dbReference type="GO" id="GO:0006886">
    <property type="term" value="P:intracellular protein transport"/>
    <property type="evidence" value="ECO:0007669"/>
    <property type="project" value="InterPro"/>
</dbReference>
<dbReference type="GO" id="GO:1903232">
    <property type="term" value="P:melanosome assembly"/>
    <property type="evidence" value="ECO:0000303"/>
    <property type="project" value="ComplexPortal"/>
</dbReference>
<dbReference type="GO" id="GO:0060155">
    <property type="term" value="P:platelet dense granule organization"/>
    <property type="evidence" value="ECO:0000303"/>
    <property type="project" value="ComplexPortal"/>
</dbReference>
<dbReference type="GO" id="GO:0006898">
    <property type="term" value="P:receptor-mediated endocytosis"/>
    <property type="evidence" value="ECO:0000304"/>
    <property type="project" value="UniProtKB"/>
</dbReference>
<dbReference type="GO" id="GO:0009615">
    <property type="term" value="P:response to virus"/>
    <property type="evidence" value="ECO:0000270"/>
    <property type="project" value="UniProtKB"/>
</dbReference>
<dbReference type="GO" id="GO:0042147">
    <property type="term" value="P:retrograde transport, endosome to Golgi"/>
    <property type="evidence" value="ECO:0007669"/>
    <property type="project" value="Ensembl"/>
</dbReference>
<dbReference type="GO" id="GO:0016192">
    <property type="term" value="P:vesicle-mediated transport"/>
    <property type="evidence" value="ECO:0000318"/>
    <property type="project" value="GO_Central"/>
</dbReference>
<dbReference type="CDD" id="cd14831">
    <property type="entry name" value="AP1_sigma"/>
    <property type="match status" value="1"/>
</dbReference>
<dbReference type="FunFam" id="3.30.450.60:FF:000005">
    <property type="entry name" value="AP complex subunit sigma"/>
    <property type="match status" value="1"/>
</dbReference>
<dbReference type="Gene3D" id="3.30.450.60">
    <property type="match status" value="1"/>
</dbReference>
<dbReference type="InterPro" id="IPR044733">
    <property type="entry name" value="AP1_sigma"/>
</dbReference>
<dbReference type="InterPro" id="IPR016635">
    <property type="entry name" value="AP_complex_ssu"/>
</dbReference>
<dbReference type="InterPro" id="IPR022775">
    <property type="entry name" value="AP_mu_sigma_su"/>
</dbReference>
<dbReference type="InterPro" id="IPR000804">
    <property type="entry name" value="Clathrin_sm-chain_CS"/>
</dbReference>
<dbReference type="InterPro" id="IPR011012">
    <property type="entry name" value="Longin-like_dom_sf"/>
</dbReference>
<dbReference type="PANTHER" id="PTHR11753">
    <property type="entry name" value="ADAPTOR COMPLEXES SMALL SUBUNIT FAMILY"/>
    <property type="match status" value="1"/>
</dbReference>
<dbReference type="Pfam" id="PF01217">
    <property type="entry name" value="Clat_adaptor_s"/>
    <property type="match status" value="1"/>
</dbReference>
<dbReference type="PIRSF" id="PIRSF015588">
    <property type="entry name" value="AP_complex_sigma"/>
    <property type="match status" value="1"/>
</dbReference>
<dbReference type="SUPFAM" id="SSF64356">
    <property type="entry name" value="SNARE-like"/>
    <property type="match status" value="1"/>
</dbReference>
<dbReference type="PROSITE" id="PS00989">
    <property type="entry name" value="CLAT_ADAPTOR_S"/>
    <property type="match status" value="1"/>
</dbReference>